<reference key="1">
    <citation type="journal article" date="2006" name="Proc. Natl. Acad. Sci. U.S.A.">
        <title>Comparative genomics of the lactic acid bacteria.</title>
        <authorList>
            <person name="Makarova K.S."/>
            <person name="Slesarev A."/>
            <person name="Wolf Y.I."/>
            <person name="Sorokin A."/>
            <person name="Mirkin B."/>
            <person name="Koonin E.V."/>
            <person name="Pavlov A."/>
            <person name="Pavlova N."/>
            <person name="Karamychev V."/>
            <person name="Polouchine N."/>
            <person name="Shakhova V."/>
            <person name="Grigoriev I."/>
            <person name="Lou Y."/>
            <person name="Rohksar D."/>
            <person name="Lucas S."/>
            <person name="Huang K."/>
            <person name="Goodstein D.M."/>
            <person name="Hawkins T."/>
            <person name="Plengvidhya V."/>
            <person name="Welker D."/>
            <person name="Hughes J."/>
            <person name="Goh Y."/>
            <person name="Benson A."/>
            <person name="Baldwin K."/>
            <person name="Lee J.-H."/>
            <person name="Diaz-Muniz I."/>
            <person name="Dosti B."/>
            <person name="Smeianov V."/>
            <person name="Wechter W."/>
            <person name="Barabote R."/>
            <person name="Lorca G."/>
            <person name="Altermann E."/>
            <person name="Barrangou R."/>
            <person name="Ganesan B."/>
            <person name="Xie Y."/>
            <person name="Rawsthorne H."/>
            <person name="Tamir D."/>
            <person name="Parker C."/>
            <person name="Breidt F."/>
            <person name="Broadbent J.R."/>
            <person name="Hutkins R."/>
            <person name="O'Sullivan D."/>
            <person name="Steele J."/>
            <person name="Unlu G."/>
            <person name="Saier M.H. Jr."/>
            <person name="Klaenhammer T."/>
            <person name="Richardson P."/>
            <person name="Kozyavkin S."/>
            <person name="Weimer B.C."/>
            <person name="Mills D.A."/>
        </authorList>
    </citation>
    <scope>NUCLEOTIDE SEQUENCE [LARGE SCALE GENOMIC DNA]</scope>
    <source>
        <strain>ATCC BAA-491 / LMD-9</strain>
    </source>
</reference>
<dbReference type="EC" id="6.1.1.14" evidence="1"/>
<dbReference type="EMBL" id="CP000419">
    <property type="protein sequence ID" value="ABJ65816.1"/>
    <property type="molecule type" value="Genomic_DNA"/>
</dbReference>
<dbReference type="RefSeq" id="WP_011680845.1">
    <property type="nucleotide sequence ID" value="NC_008532.1"/>
</dbReference>
<dbReference type="SMR" id="Q03LV6"/>
<dbReference type="KEGG" id="ste:STER_0540"/>
<dbReference type="HOGENOM" id="CLU_007220_2_2_9"/>
<dbReference type="GO" id="GO:0005829">
    <property type="term" value="C:cytosol"/>
    <property type="evidence" value="ECO:0007669"/>
    <property type="project" value="TreeGrafter"/>
</dbReference>
<dbReference type="GO" id="GO:0004814">
    <property type="term" value="F:arginine-tRNA ligase activity"/>
    <property type="evidence" value="ECO:0007669"/>
    <property type="project" value="InterPro"/>
</dbReference>
<dbReference type="GO" id="GO:0005524">
    <property type="term" value="F:ATP binding"/>
    <property type="evidence" value="ECO:0007669"/>
    <property type="project" value="UniProtKB-UniRule"/>
</dbReference>
<dbReference type="GO" id="GO:0004820">
    <property type="term" value="F:glycine-tRNA ligase activity"/>
    <property type="evidence" value="ECO:0007669"/>
    <property type="project" value="UniProtKB-UniRule"/>
</dbReference>
<dbReference type="GO" id="GO:0006420">
    <property type="term" value="P:arginyl-tRNA aminoacylation"/>
    <property type="evidence" value="ECO:0007669"/>
    <property type="project" value="InterPro"/>
</dbReference>
<dbReference type="GO" id="GO:0006426">
    <property type="term" value="P:glycyl-tRNA aminoacylation"/>
    <property type="evidence" value="ECO:0007669"/>
    <property type="project" value="UniProtKB-UniRule"/>
</dbReference>
<dbReference type="HAMAP" id="MF_00255">
    <property type="entry name" value="Gly_tRNA_synth_beta"/>
    <property type="match status" value="1"/>
</dbReference>
<dbReference type="InterPro" id="IPR008909">
    <property type="entry name" value="DALR_anticod-bd"/>
</dbReference>
<dbReference type="InterPro" id="IPR015944">
    <property type="entry name" value="Gly-tRNA-synth_bsu"/>
</dbReference>
<dbReference type="InterPro" id="IPR006194">
    <property type="entry name" value="Gly-tRNA-synth_heterodimer"/>
</dbReference>
<dbReference type="NCBIfam" id="TIGR00211">
    <property type="entry name" value="glyS"/>
    <property type="match status" value="1"/>
</dbReference>
<dbReference type="PANTHER" id="PTHR30075:SF2">
    <property type="entry name" value="GLYCINE--TRNA LIGASE, CHLOROPLASTIC_MITOCHONDRIAL 2"/>
    <property type="match status" value="1"/>
</dbReference>
<dbReference type="PANTHER" id="PTHR30075">
    <property type="entry name" value="GLYCYL-TRNA SYNTHETASE"/>
    <property type="match status" value="1"/>
</dbReference>
<dbReference type="Pfam" id="PF05746">
    <property type="entry name" value="DALR_1"/>
    <property type="match status" value="1"/>
</dbReference>
<dbReference type="Pfam" id="PF02092">
    <property type="entry name" value="tRNA_synt_2f"/>
    <property type="match status" value="1"/>
</dbReference>
<dbReference type="PRINTS" id="PR01045">
    <property type="entry name" value="TRNASYNTHGB"/>
</dbReference>
<dbReference type="SUPFAM" id="SSF109604">
    <property type="entry name" value="HD-domain/PDEase-like"/>
    <property type="match status" value="1"/>
</dbReference>
<dbReference type="PROSITE" id="PS50861">
    <property type="entry name" value="AA_TRNA_LIGASE_II_GLYAB"/>
    <property type="match status" value="1"/>
</dbReference>
<organism>
    <name type="scientific">Streptococcus thermophilus (strain ATCC BAA-491 / LMD-9)</name>
    <dbReference type="NCBI Taxonomy" id="322159"/>
    <lineage>
        <taxon>Bacteria</taxon>
        <taxon>Bacillati</taxon>
        <taxon>Bacillota</taxon>
        <taxon>Bacilli</taxon>
        <taxon>Lactobacillales</taxon>
        <taxon>Streptococcaceae</taxon>
        <taxon>Streptococcus</taxon>
    </lineage>
</organism>
<evidence type="ECO:0000255" key="1">
    <source>
        <dbReference type="HAMAP-Rule" id="MF_00255"/>
    </source>
</evidence>
<feature type="chain" id="PRO_1000101361" description="Glycine--tRNA ligase beta subunit">
    <location>
        <begin position="1"/>
        <end position="678"/>
    </location>
</feature>
<name>SYGB_STRTD</name>
<comment type="catalytic activity">
    <reaction evidence="1">
        <text>tRNA(Gly) + glycine + ATP = glycyl-tRNA(Gly) + AMP + diphosphate</text>
        <dbReference type="Rhea" id="RHEA:16013"/>
        <dbReference type="Rhea" id="RHEA-COMP:9664"/>
        <dbReference type="Rhea" id="RHEA-COMP:9683"/>
        <dbReference type="ChEBI" id="CHEBI:30616"/>
        <dbReference type="ChEBI" id="CHEBI:33019"/>
        <dbReference type="ChEBI" id="CHEBI:57305"/>
        <dbReference type="ChEBI" id="CHEBI:78442"/>
        <dbReference type="ChEBI" id="CHEBI:78522"/>
        <dbReference type="ChEBI" id="CHEBI:456215"/>
        <dbReference type="EC" id="6.1.1.14"/>
    </reaction>
</comment>
<comment type="subunit">
    <text evidence="1">Tetramer of two alpha and two beta subunits.</text>
</comment>
<comment type="subcellular location">
    <subcellularLocation>
        <location evidence="1">Cytoplasm</location>
    </subcellularLocation>
</comment>
<comment type="similarity">
    <text evidence="1">Belongs to the class-II aminoacyl-tRNA synthetase family.</text>
</comment>
<accession>Q03LV6</accession>
<protein>
    <recommendedName>
        <fullName evidence="1">Glycine--tRNA ligase beta subunit</fullName>
        <ecNumber evidence="1">6.1.1.14</ecNumber>
    </recommendedName>
    <alternativeName>
        <fullName evidence="1">Glycyl-tRNA synthetase beta subunit</fullName>
        <shortName evidence="1">GlyRS</shortName>
    </alternativeName>
</protein>
<sequence length="678" mass="74442">MTKNLLVELGLEELPAYVVTPSEKQLGEKMAAFLGENRLSYESIQTFSTPRRLAVRVLGLADQQTDLTEDFKGPSKKIALDADGNFSKAAQGFVRGKGLTVDDIEFREVKGEEYVYVTKHEAGKSAKEVLAGIPEVLASLTFPVSMHWANNSFEYIRPVHTLIVLLGDEALELDFLGIKSGRVSRGHRFLGHEVEITNADSYEEDLRTVYVIADSKERENMIREQIKAIEAEQGVQVQIEEGLLNEVLNLVEYPTTFMGGFDTKYLDVPEDVLVTSMETHQRYFVVRDLDGRLKPNFISVRNGNAEHLENVVRGNEKVLVARLEDGEFFWREDQKLKIEDLVAKLANVTFHEKIGSLSEHMARAGVIAASLAEKAGLTAEEKAAVARAAEIYKFDLLTGMVGEFDELQGIMGEKYALLAGEDEAVATAIREHYLPDSADGALPETKVGAILALADKLDTLLSFFSVGLIPSGSNDPYALRRATQGIVRILDAFGWHIPMDELIDSLYGLSFDSLSYDNQAEVIRFIKARVDKMMGSTPKDIKEAVLSGSNFVVADMLEAAEALSEAAKTDGYKAAVESLSRAFNLAEKADTSVAVDASLFENDQEKALAQVAESLELTGSASDKLAQLFVLSPVIDAFFDNTMVMADDVAVKNNRLALLSALVAKAKTVAAFNQLNTK</sequence>
<proteinExistence type="inferred from homology"/>
<keyword id="KW-0030">Aminoacyl-tRNA synthetase</keyword>
<keyword id="KW-0067">ATP-binding</keyword>
<keyword id="KW-0963">Cytoplasm</keyword>
<keyword id="KW-0436">Ligase</keyword>
<keyword id="KW-0547">Nucleotide-binding</keyword>
<keyword id="KW-0648">Protein biosynthesis</keyword>
<gene>
    <name evidence="1" type="primary">glyS</name>
    <name type="ordered locus">STER_0540</name>
</gene>